<reference key="1">
    <citation type="journal article" date="1998" name="Nature">
        <title>The complete genome of the hyperthermophilic bacterium Aquifex aeolicus.</title>
        <authorList>
            <person name="Deckert G."/>
            <person name="Warren P.V."/>
            <person name="Gaasterland T."/>
            <person name="Young W.G."/>
            <person name="Lenox A.L."/>
            <person name="Graham D.E."/>
            <person name="Overbeek R."/>
            <person name="Snead M.A."/>
            <person name="Keller M."/>
            <person name="Aujay M."/>
            <person name="Huber R."/>
            <person name="Feldman R.A."/>
            <person name="Short J.M."/>
            <person name="Olsen G.J."/>
            <person name="Swanson R.V."/>
        </authorList>
    </citation>
    <scope>NUCLEOTIDE SEQUENCE [LARGE SCALE GENOMIC DNA]</scope>
    <source>
        <strain>VF5</strain>
    </source>
</reference>
<proteinExistence type="inferred from homology"/>
<comment type="function">
    <text evidence="1">One of the essential components for the initiation of protein synthesis. Protects formylmethionyl-tRNA from spontaneous hydrolysis and promotes its binding to the 30S ribosomal subunits. Also involved in the hydrolysis of GTP during the formation of the 70S ribosomal complex (By similarity).</text>
</comment>
<comment type="subcellular location">
    <subcellularLocation>
        <location evidence="1">Cytoplasm</location>
    </subcellularLocation>
</comment>
<comment type="similarity">
    <text evidence="3">Belongs to the TRAFAC class translation factor GTPase superfamily. Classic translation factor GTPase family. IF-2 subfamily.</text>
</comment>
<protein>
    <recommendedName>
        <fullName>Translation initiation factor IF-2</fullName>
    </recommendedName>
</protein>
<gene>
    <name type="primary">infB</name>
    <name type="ordered locus">aq_2032</name>
</gene>
<dbReference type="EMBL" id="AE000657">
    <property type="protein sequence ID" value="AAC07794.1"/>
    <property type="molecule type" value="Genomic_DNA"/>
</dbReference>
<dbReference type="PIR" id="E70474">
    <property type="entry name" value="E70474"/>
</dbReference>
<dbReference type="RefSeq" id="NP_214394.1">
    <property type="nucleotide sequence ID" value="NC_000918.1"/>
</dbReference>
<dbReference type="RefSeq" id="WP_010881330.1">
    <property type="nucleotide sequence ID" value="NC_000918.1"/>
</dbReference>
<dbReference type="SMR" id="O67825"/>
<dbReference type="FunCoup" id="O67825">
    <property type="interactions" value="482"/>
</dbReference>
<dbReference type="STRING" id="224324.aq_2032"/>
<dbReference type="EnsemblBacteria" id="AAC07794">
    <property type="protein sequence ID" value="AAC07794"/>
    <property type="gene ID" value="aq_2032"/>
</dbReference>
<dbReference type="KEGG" id="aae:aq_2032"/>
<dbReference type="PATRIC" id="fig|224324.8.peg.1571"/>
<dbReference type="eggNOG" id="COG0532">
    <property type="taxonomic scope" value="Bacteria"/>
</dbReference>
<dbReference type="HOGENOM" id="CLU_006301_10_2_0"/>
<dbReference type="InParanoid" id="O67825"/>
<dbReference type="OrthoDB" id="9811804at2"/>
<dbReference type="Proteomes" id="UP000000798">
    <property type="component" value="Chromosome"/>
</dbReference>
<dbReference type="GO" id="GO:0005737">
    <property type="term" value="C:cytoplasm"/>
    <property type="evidence" value="ECO:0000318"/>
    <property type="project" value="GO_Central"/>
</dbReference>
<dbReference type="GO" id="GO:0005829">
    <property type="term" value="C:cytosol"/>
    <property type="evidence" value="ECO:0000318"/>
    <property type="project" value="GO_Central"/>
</dbReference>
<dbReference type="GO" id="GO:0005525">
    <property type="term" value="F:GTP binding"/>
    <property type="evidence" value="ECO:0007669"/>
    <property type="project" value="UniProtKB-KW"/>
</dbReference>
<dbReference type="GO" id="GO:0003924">
    <property type="term" value="F:GTPase activity"/>
    <property type="evidence" value="ECO:0007669"/>
    <property type="project" value="UniProtKB-UniRule"/>
</dbReference>
<dbReference type="GO" id="GO:0003743">
    <property type="term" value="F:translation initiation factor activity"/>
    <property type="evidence" value="ECO:0000318"/>
    <property type="project" value="GO_Central"/>
</dbReference>
<dbReference type="GO" id="GO:0006413">
    <property type="term" value="P:translational initiation"/>
    <property type="evidence" value="ECO:0000318"/>
    <property type="project" value="GO_Central"/>
</dbReference>
<dbReference type="CDD" id="cd01887">
    <property type="entry name" value="IF2_eIF5B"/>
    <property type="match status" value="1"/>
</dbReference>
<dbReference type="CDD" id="cd03702">
    <property type="entry name" value="IF2_mtIF2_II"/>
    <property type="match status" value="1"/>
</dbReference>
<dbReference type="CDD" id="cd03692">
    <property type="entry name" value="mtIF2_IVc"/>
    <property type="match status" value="1"/>
</dbReference>
<dbReference type="FunFam" id="2.40.30.10:FF:000007">
    <property type="entry name" value="Translation initiation factor IF-2"/>
    <property type="match status" value="1"/>
</dbReference>
<dbReference type="FunFam" id="2.40.30.10:FF:000008">
    <property type="entry name" value="Translation initiation factor IF-2"/>
    <property type="match status" value="1"/>
</dbReference>
<dbReference type="FunFam" id="3.40.50.10050:FF:000001">
    <property type="entry name" value="Translation initiation factor IF-2"/>
    <property type="match status" value="1"/>
</dbReference>
<dbReference type="FunFam" id="3.40.50.300:FF:000019">
    <property type="entry name" value="Translation initiation factor IF-2"/>
    <property type="match status" value="1"/>
</dbReference>
<dbReference type="Gene3D" id="1.10.10.2480">
    <property type="match status" value="1"/>
</dbReference>
<dbReference type="Gene3D" id="3.40.50.300">
    <property type="entry name" value="P-loop containing nucleotide triphosphate hydrolases"/>
    <property type="match status" value="1"/>
</dbReference>
<dbReference type="Gene3D" id="2.40.30.10">
    <property type="entry name" value="Translation factors"/>
    <property type="match status" value="2"/>
</dbReference>
<dbReference type="Gene3D" id="3.40.50.10050">
    <property type="entry name" value="Translation initiation factor IF- 2, domain 3"/>
    <property type="match status" value="1"/>
</dbReference>
<dbReference type="HAMAP" id="MF_00100_B">
    <property type="entry name" value="IF_2_B"/>
    <property type="match status" value="1"/>
</dbReference>
<dbReference type="InterPro" id="IPR053905">
    <property type="entry name" value="EF-G-like_DII"/>
</dbReference>
<dbReference type="InterPro" id="IPR004161">
    <property type="entry name" value="EFTu-like_2"/>
</dbReference>
<dbReference type="InterPro" id="IPR044145">
    <property type="entry name" value="IF2_II"/>
</dbReference>
<dbReference type="InterPro" id="IPR006847">
    <property type="entry name" value="IF2_N"/>
</dbReference>
<dbReference type="InterPro" id="IPR027417">
    <property type="entry name" value="P-loop_NTPase"/>
</dbReference>
<dbReference type="InterPro" id="IPR005225">
    <property type="entry name" value="Small_GTP-bd"/>
</dbReference>
<dbReference type="InterPro" id="IPR000795">
    <property type="entry name" value="T_Tr_GTP-bd_dom"/>
</dbReference>
<dbReference type="InterPro" id="IPR000178">
    <property type="entry name" value="TF_IF2_bacterial-like"/>
</dbReference>
<dbReference type="InterPro" id="IPR015760">
    <property type="entry name" value="TIF_IF2"/>
</dbReference>
<dbReference type="InterPro" id="IPR023115">
    <property type="entry name" value="TIF_IF2_dom3"/>
</dbReference>
<dbReference type="InterPro" id="IPR036925">
    <property type="entry name" value="TIF_IF2_dom3_sf"/>
</dbReference>
<dbReference type="InterPro" id="IPR009000">
    <property type="entry name" value="Transl_B-barrel_sf"/>
</dbReference>
<dbReference type="NCBIfam" id="TIGR00487">
    <property type="entry name" value="IF-2"/>
    <property type="match status" value="1"/>
</dbReference>
<dbReference type="NCBIfam" id="TIGR00231">
    <property type="entry name" value="small_GTP"/>
    <property type="match status" value="1"/>
</dbReference>
<dbReference type="PANTHER" id="PTHR43381:SF5">
    <property type="entry name" value="TR-TYPE G DOMAIN-CONTAINING PROTEIN"/>
    <property type="match status" value="1"/>
</dbReference>
<dbReference type="PANTHER" id="PTHR43381">
    <property type="entry name" value="TRANSLATION INITIATION FACTOR IF-2-RELATED"/>
    <property type="match status" value="1"/>
</dbReference>
<dbReference type="Pfam" id="PF22042">
    <property type="entry name" value="EF-G_D2"/>
    <property type="match status" value="1"/>
</dbReference>
<dbReference type="Pfam" id="PF00009">
    <property type="entry name" value="GTP_EFTU"/>
    <property type="match status" value="1"/>
</dbReference>
<dbReference type="Pfam" id="PF03144">
    <property type="entry name" value="GTP_EFTU_D2"/>
    <property type="match status" value="1"/>
</dbReference>
<dbReference type="Pfam" id="PF11987">
    <property type="entry name" value="IF-2"/>
    <property type="match status" value="1"/>
</dbReference>
<dbReference type="Pfam" id="PF04760">
    <property type="entry name" value="IF2_N"/>
    <property type="match status" value="2"/>
</dbReference>
<dbReference type="SUPFAM" id="SSF52156">
    <property type="entry name" value="Initiation factor IF2/eIF5b, domain 3"/>
    <property type="match status" value="1"/>
</dbReference>
<dbReference type="SUPFAM" id="SSF52540">
    <property type="entry name" value="P-loop containing nucleoside triphosphate hydrolases"/>
    <property type="match status" value="1"/>
</dbReference>
<dbReference type="SUPFAM" id="SSF50447">
    <property type="entry name" value="Translation proteins"/>
    <property type="match status" value="2"/>
</dbReference>
<dbReference type="PROSITE" id="PS51722">
    <property type="entry name" value="G_TR_2"/>
    <property type="match status" value="1"/>
</dbReference>
<dbReference type="PROSITE" id="PS01176">
    <property type="entry name" value="IF2"/>
    <property type="match status" value="1"/>
</dbReference>
<keyword id="KW-0963">Cytoplasm</keyword>
<keyword id="KW-0342">GTP-binding</keyword>
<keyword id="KW-0396">Initiation factor</keyword>
<keyword id="KW-0547">Nucleotide-binding</keyword>
<keyword id="KW-0648">Protein biosynthesis</keyword>
<keyword id="KW-1185">Reference proteome</keyword>
<name>IF2_AQUAE</name>
<feature type="chain" id="PRO_0000137166" description="Translation initiation factor IF-2">
    <location>
        <begin position="1"/>
        <end position="805"/>
    </location>
</feature>
<feature type="domain" description="tr-type G">
    <location>
        <begin position="306"/>
        <end position="474"/>
    </location>
</feature>
<feature type="region of interest" description="Disordered" evidence="2">
    <location>
        <begin position="68"/>
        <end position="89"/>
    </location>
</feature>
<feature type="region of interest" description="Disordered" evidence="2">
    <location>
        <begin position="141"/>
        <end position="215"/>
    </location>
</feature>
<feature type="region of interest" description="G1" evidence="1">
    <location>
        <begin position="315"/>
        <end position="322"/>
    </location>
</feature>
<feature type="region of interest" description="G2" evidence="1">
    <location>
        <begin position="340"/>
        <end position="344"/>
    </location>
</feature>
<feature type="region of interest" description="G3" evidence="1">
    <location>
        <begin position="362"/>
        <end position="365"/>
    </location>
</feature>
<feature type="region of interest" description="G4" evidence="1">
    <location>
        <begin position="416"/>
        <end position="419"/>
    </location>
</feature>
<feature type="region of interest" description="G5" evidence="1">
    <location>
        <begin position="452"/>
        <end position="454"/>
    </location>
</feature>
<feature type="compositionally biased region" description="Basic and acidic residues" evidence="2">
    <location>
        <begin position="79"/>
        <end position="89"/>
    </location>
</feature>
<feature type="binding site" evidence="1">
    <location>
        <begin position="315"/>
        <end position="322"/>
    </location>
    <ligand>
        <name>GTP</name>
        <dbReference type="ChEBI" id="CHEBI:37565"/>
    </ligand>
</feature>
<feature type="binding site" evidence="1">
    <location>
        <begin position="362"/>
        <end position="366"/>
    </location>
    <ligand>
        <name>GTP</name>
        <dbReference type="ChEBI" id="CHEBI:37565"/>
    </ligand>
</feature>
<feature type="binding site" evidence="1">
    <location>
        <begin position="416"/>
        <end position="419"/>
    </location>
    <ligand>
        <name>GTP</name>
        <dbReference type="ChEBI" id="CHEBI:37565"/>
    </ligand>
</feature>
<organism>
    <name type="scientific">Aquifex aeolicus (strain VF5)</name>
    <dbReference type="NCBI Taxonomy" id="224324"/>
    <lineage>
        <taxon>Bacteria</taxon>
        <taxon>Pseudomonadati</taxon>
        <taxon>Aquificota</taxon>
        <taxon>Aquificia</taxon>
        <taxon>Aquificales</taxon>
        <taxon>Aquificaceae</taxon>
        <taxon>Aquifex</taxon>
    </lineage>
</organism>
<sequence>MSLTKTKRVSDVAKELGVKSKEIIEFLNEYYPRPDGKPWKASHGLDEQALEMIYDAFGIKEEEEKEEVVTEQAQAPAEVEEKKEEEKKEEVIVEEVVEEKKPEVIVEEIEEKKEEEEKKEEEKPKKSVEELIKEILEKKEKEKEKKKVEKERKEEKVRVVEVKKEERKEEKKEEKKEEEKPKIKMSKKEREIMRKLEHAVEKEKKKQEKREKEKKKKEEEVKIIYIPEVITVRELAELLDVPANKVIAELMKRGVLATINQPVPPEVAVEVAESFGYLAEVKKEEEELEEEALLKEEEEREEELQPRPPIVVVMGHVDHGKTTLLDRIRKTNVAEREKGGITQHIGASQVELPDGRKITFLDTPGHEAFTTLRARGAKVTDISVLVVAADDGVMPQTIEAINHAKAFNVPIIVAVNKIDKPNADPMKVRRELSEHGLIPEEWGGDTIFVDISAKTGQNVDQLLEMILLLADILELKANPNKKARGTIIESKLDRKRGPVATVIVEDGTLRVGDHFVAGTTYGRVRAMFDDKGRQVKEAPPSTPVEVLGFEELPEAGDELIVVDDERTAREIAEKRKEKKEREEKLQTIRLEDIYKKIQTGETKELRIVLKTDTMGSLEALKKSLEELSNEKVQVKIIHGAVGGITENDIMLAKASGAIVIGFNTRPDPKARELMEKEKVDVRLYGVIYEAIEDVKKALVGLLEPIKKEEVIGMAEVRATFKIKKVGTVAGCYVLNGKLVRGAKARLIREGVVIYDGEIESLKRFKEDVQEVTAGYECGVKLKDYNDVKVGDQIECYEIRYEKPTL</sequence>
<accession>O67825</accession>
<evidence type="ECO:0000250" key="1"/>
<evidence type="ECO:0000256" key="2">
    <source>
        <dbReference type="SAM" id="MobiDB-lite"/>
    </source>
</evidence>
<evidence type="ECO:0000305" key="3"/>